<evidence type="ECO:0000255" key="1">
    <source>
        <dbReference type="HAMAP-Rule" id="MF_00323"/>
    </source>
</evidence>
<proteinExistence type="inferred from homology"/>
<gene>
    <name evidence="1" type="primary">hemH</name>
    <name type="ordered locus">SG0500</name>
</gene>
<reference key="1">
    <citation type="journal article" date="2008" name="Genome Res.">
        <title>Comparative genome analysis of Salmonella enteritidis PT4 and Salmonella gallinarum 287/91 provides insights into evolutionary and host adaptation pathways.</title>
        <authorList>
            <person name="Thomson N.R."/>
            <person name="Clayton D.J."/>
            <person name="Windhorst D."/>
            <person name="Vernikos G."/>
            <person name="Davidson S."/>
            <person name="Churcher C."/>
            <person name="Quail M.A."/>
            <person name="Stevens M."/>
            <person name="Jones M.A."/>
            <person name="Watson M."/>
            <person name="Barron A."/>
            <person name="Layton A."/>
            <person name="Pickard D."/>
            <person name="Kingsley R.A."/>
            <person name="Bignell A."/>
            <person name="Clark L."/>
            <person name="Harris B."/>
            <person name="Ormond D."/>
            <person name="Abdellah Z."/>
            <person name="Brooks K."/>
            <person name="Cherevach I."/>
            <person name="Chillingworth T."/>
            <person name="Woodward J."/>
            <person name="Norberczak H."/>
            <person name="Lord A."/>
            <person name="Arrowsmith C."/>
            <person name="Jagels K."/>
            <person name="Moule S."/>
            <person name="Mungall K."/>
            <person name="Saunders M."/>
            <person name="Whitehead S."/>
            <person name="Chabalgoity J.A."/>
            <person name="Maskell D."/>
            <person name="Humphreys T."/>
            <person name="Roberts M."/>
            <person name="Barrow P.A."/>
            <person name="Dougan G."/>
            <person name="Parkhill J."/>
        </authorList>
    </citation>
    <scope>NUCLEOTIDE SEQUENCE [LARGE SCALE GENOMIC DNA]</scope>
    <source>
        <strain>287/91 / NCTC 13346</strain>
    </source>
</reference>
<comment type="function">
    <text evidence="1">Catalyzes the ferrous insertion into protoporphyrin IX.</text>
</comment>
<comment type="catalytic activity">
    <reaction evidence="1">
        <text>heme b + 2 H(+) = protoporphyrin IX + Fe(2+)</text>
        <dbReference type="Rhea" id="RHEA:22584"/>
        <dbReference type="ChEBI" id="CHEBI:15378"/>
        <dbReference type="ChEBI" id="CHEBI:29033"/>
        <dbReference type="ChEBI" id="CHEBI:57306"/>
        <dbReference type="ChEBI" id="CHEBI:60344"/>
        <dbReference type="EC" id="4.98.1.1"/>
    </reaction>
</comment>
<comment type="pathway">
    <text evidence="1">Porphyrin-containing compound metabolism; protoheme biosynthesis; protoheme from protoporphyrin-IX: step 1/1.</text>
</comment>
<comment type="subunit">
    <text evidence="1">Monomer.</text>
</comment>
<comment type="subcellular location">
    <subcellularLocation>
        <location evidence="1">Cytoplasm</location>
    </subcellularLocation>
</comment>
<comment type="similarity">
    <text evidence="1">Belongs to the ferrochelatase family.</text>
</comment>
<accession>B5R613</accession>
<organism>
    <name type="scientific">Salmonella gallinarum (strain 287/91 / NCTC 13346)</name>
    <dbReference type="NCBI Taxonomy" id="550538"/>
    <lineage>
        <taxon>Bacteria</taxon>
        <taxon>Pseudomonadati</taxon>
        <taxon>Pseudomonadota</taxon>
        <taxon>Gammaproteobacteria</taxon>
        <taxon>Enterobacterales</taxon>
        <taxon>Enterobacteriaceae</taxon>
        <taxon>Salmonella</taxon>
    </lineage>
</organism>
<name>HEMH_SALG2</name>
<dbReference type="EC" id="4.98.1.1" evidence="1"/>
<dbReference type="EMBL" id="AM933173">
    <property type="protein sequence ID" value="CAR36398.1"/>
    <property type="molecule type" value="Genomic_DNA"/>
</dbReference>
<dbReference type="RefSeq" id="WP_001250083.1">
    <property type="nucleotide sequence ID" value="NC_011274.1"/>
</dbReference>
<dbReference type="SMR" id="B5R613"/>
<dbReference type="KEGG" id="seg:SG0500"/>
<dbReference type="HOGENOM" id="CLU_018884_0_0_6"/>
<dbReference type="UniPathway" id="UPA00252">
    <property type="reaction ID" value="UER00325"/>
</dbReference>
<dbReference type="Proteomes" id="UP000008321">
    <property type="component" value="Chromosome"/>
</dbReference>
<dbReference type="GO" id="GO:0005737">
    <property type="term" value="C:cytoplasm"/>
    <property type="evidence" value="ECO:0007669"/>
    <property type="project" value="UniProtKB-SubCell"/>
</dbReference>
<dbReference type="GO" id="GO:0004325">
    <property type="term" value="F:ferrochelatase activity"/>
    <property type="evidence" value="ECO:0007669"/>
    <property type="project" value="UniProtKB-UniRule"/>
</dbReference>
<dbReference type="GO" id="GO:0046872">
    <property type="term" value="F:metal ion binding"/>
    <property type="evidence" value="ECO:0007669"/>
    <property type="project" value="UniProtKB-KW"/>
</dbReference>
<dbReference type="GO" id="GO:0006783">
    <property type="term" value="P:heme biosynthetic process"/>
    <property type="evidence" value="ECO:0007669"/>
    <property type="project" value="UniProtKB-UniRule"/>
</dbReference>
<dbReference type="CDD" id="cd00419">
    <property type="entry name" value="Ferrochelatase_C"/>
    <property type="match status" value="1"/>
</dbReference>
<dbReference type="CDD" id="cd03411">
    <property type="entry name" value="Ferrochelatase_N"/>
    <property type="match status" value="1"/>
</dbReference>
<dbReference type="FunFam" id="3.40.50.1400:FF:000004">
    <property type="entry name" value="Ferrochelatase"/>
    <property type="match status" value="1"/>
</dbReference>
<dbReference type="Gene3D" id="3.40.50.1400">
    <property type="match status" value="2"/>
</dbReference>
<dbReference type="HAMAP" id="MF_00323">
    <property type="entry name" value="Ferrochelatase"/>
    <property type="match status" value="1"/>
</dbReference>
<dbReference type="InterPro" id="IPR001015">
    <property type="entry name" value="Ferrochelatase"/>
</dbReference>
<dbReference type="InterPro" id="IPR019772">
    <property type="entry name" value="Ferrochelatase_AS"/>
</dbReference>
<dbReference type="InterPro" id="IPR033644">
    <property type="entry name" value="Ferrochelatase_C"/>
</dbReference>
<dbReference type="InterPro" id="IPR033659">
    <property type="entry name" value="Ferrochelatase_N"/>
</dbReference>
<dbReference type="NCBIfam" id="TIGR00109">
    <property type="entry name" value="hemH"/>
    <property type="match status" value="1"/>
</dbReference>
<dbReference type="PANTHER" id="PTHR11108">
    <property type="entry name" value="FERROCHELATASE"/>
    <property type="match status" value="1"/>
</dbReference>
<dbReference type="PANTHER" id="PTHR11108:SF1">
    <property type="entry name" value="FERROCHELATASE, MITOCHONDRIAL"/>
    <property type="match status" value="1"/>
</dbReference>
<dbReference type="Pfam" id="PF00762">
    <property type="entry name" value="Ferrochelatase"/>
    <property type="match status" value="1"/>
</dbReference>
<dbReference type="SUPFAM" id="SSF53800">
    <property type="entry name" value="Chelatase"/>
    <property type="match status" value="1"/>
</dbReference>
<dbReference type="PROSITE" id="PS00534">
    <property type="entry name" value="FERROCHELATASE"/>
    <property type="match status" value="1"/>
</dbReference>
<protein>
    <recommendedName>
        <fullName evidence="1">Ferrochelatase</fullName>
        <ecNumber evidence="1">4.98.1.1</ecNumber>
    </recommendedName>
    <alternativeName>
        <fullName evidence="1">Heme synthase</fullName>
    </alternativeName>
    <alternativeName>
        <fullName evidence="1">Protoheme ferro-lyase</fullName>
    </alternativeName>
</protein>
<keyword id="KW-0963">Cytoplasm</keyword>
<keyword id="KW-0350">Heme biosynthesis</keyword>
<keyword id="KW-0408">Iron</keyword>
<keyword id="KW-0456">Lyase</keyword>
<keyword id="KW-0479">Metal-binding</keyword>
<keyword id="KW-0627">Porphyrin biosynthesis</keyword>
<sequence length="320" mass="35944">MRQTKTGILLANLGTPDAPTPEAVKRYLKQFLSDRRVVDTPRLLWWPLLRGVILPLRSPRVAKLYQSIWMDGGSPLMVYSREQQQALAARLPDTPVALGMSYGSPSLESAVDELLASDVDHIVVLPLYPQYSCSTVGAVWDELGRILARKRRIPGISFIRDYADDSAYIDALAKSARESFARHGEPDVLLLSYHGIPQRYADEGDDYPQRCRDTTRELVSALGLPPEKVMMTFQSRFGREPWLTPYTDETLKMLGEKGTGHIQVMCPGFAADCLETLEEIAEQNREIFLEAGGKKYAYIPALNATPEHIDMMLKLTAPYR</sequence>
<feature type="chain" id="PRO_1000116076" description="Ferrochelatase">
    <location>
        <begin position="1"/>
        <end position="320"/>
    </location>
</feature>
<feature type="binding site" evidence="1">
    <location>
        <position position="194"/>
    </location>
    <ligand>
        <name>Fe cation</name>
        <dbReference type="ChEBI" id="CHEBI:24875"/>
    </ligand>
</feature>
<feature type="binding site" evidence="1">
    <location>
        <position position="275"/>
    </location>
    <ligand>
        <name>Fe cation</name>
        <dbReference type="ChEBI" id="CHEBI:24875"/>
    </ligand>
</feature>